<dbReference type="EC" id="2.7.4.25" evidence="1"/>
<dbReference type="EMBL" id="CP001252">
    <property type="protein sequence ID" value="ACK46569.1"/>
    <property type="molecule type" value="Genomic_DNA"/>
</dbReference>
<dbReference type="RefSeq" id="WP_006081720.1">
    <property type="nucleotide sequence ID" value="NC_011663.1"/>
</dbReference>
<dbReference type="SMR" id="B8EA96"/>
<dbReference type="GeneID" id="11772514"/>
<dbReference type="KEGG" id="sbp:Sbal223_2065"/>
<dbReference type="HOGENOM" id="CLU_079959_2_0_6"/>
<dbReference type="Proteomes" id="UP000002507">
    <property type="component" value="Chromosome"/>
</dbReference>
<dbReference type="GO" id="GO:0005829">
    <property type="term" value="C:cytosol"/>
    <property type="evidence" value="ECO:0007669"/>
    <property type="project" value="TreeGrafter"/>
</dbReference>
<dbReference type="GO" id="GO:0005524">
    <property type="term" value="F:ATP binding"/>
    <property type="evidence" value="ECO:0007669"/>
    <property type="project" value="UniProtKB-UniRule"/>
</dbReference>
<dbReference type="GO" id="GO:0036430">
    <property type="term" value="F:CMP kinase activity"/>
    <property type="evidence" value="ECO:0007669"/>
    <property type="project" value="RHEA"/>
</dbReference>
<dbReference type="GO" id="GO:0036431">
    <property type="term" value="F:dCMP kinase activity"/>
    <property type="evidence" value="ECO:0007669"/>
    <property type="project" value="RHEA"/>
</dbReference>
<dbReference type="GO" id="GO:0015949">
    <property type="term" value="P:nucleobase-containing small molecule interconversion"/>
    <property type="evidence" value="ECO:0007669"/>
    <property type="project" value="TreeGrafter"/>
</dbReference>
<dbReference type="GO" id="GO:0006220">
    <property type="term" value="P:pyrimidine nucleotide metabolic process"/>
    <property type="evidence" value="ECO:0007669"/>
    <property type="project" value="UniProtKB-UniRule"/>
</dbReference>
<dbReference type="CDD" id="cd02020">
    <property type="entry name" value="CMPK"/>
    <property type="match status" value="1"/>
</dbReference>
<dbReference type="FunFam" id="3.40.50.300:FF:000262">
    <property type="entry name" value="Cytidylate kinase"/>
    <property type="match status" value="1"/>
</dbReference>
<dbReference type="Gene3D" id="3.40.50.300">
    <property type="entry name" value="P-loop containing nucleotide triphosphate hydrolases"/>
    <property type="match status" value="1"/>
</dbReference>
<dbReference type="HAMAP" id="MF_00238">
    <property type="entry name" value="Cytidyl_kinase_type1"/>
    <property type="match status" value="1"/>
</dbReference>
<dbReference type="InterPro" id="IPR003136">
    <property type="entry name" value="Cytidylate_kin"/>
</dbReference>
<dbReference type="InterPro" id="IPR011994">
    <property type="entry name" value="Cytidylate_kinase_dom"/>
</dbReference>
<dbReference type="InterPro" id="IPR027417">
    <property type="entry name" value="P-loop_NTPase"/>
</dbReference>
<dbReference type="NCBIfam" id="TIGR00017">
    <property type="entry name" value="cmk"/>
    <property type="match status" value="1"/>
</dbReference>
<dbReference type="PANTHER" id="PTHR21299:SF2">
    <property type="entry name" value="CYTIDYLATE KINASE"/>
    <property type="match status" value="1"/>
</dbReference>
<dbReference type="PANTHER" id="PTHR21299">
    <property type="entry name" value="CYTIDYLATE KINASE/PANTOATE-BETA-ALANINE LIGASE"/>
    <property type="match status" value="1"/>
</dbReference>
<dbReference type="Pfam" id="PF02224">
    <property type="entry name" value="Cytidylate_kin"/>
    <property type="match status" value="1"/>
</dbReference>
<dbReference type="SUPFAM" id="SSF52540">
    <property type="entry name" value="P-loop containing nucleoside triphosphate hydrolases"/>
    <property type="match status" value="1"/>
</dbReference>
<protein>
    <recommendedName>
        <fullName evidence="1">Cytidylate kinase</fullName>
        <shortName evidence="1">CK</shortName>
        <ecNumber evidence="1">2.7.4.25</ecNumber>
    </recommendedName>
    <alternativeName>
        <fullName evidence="1">Cytidine monophosphate kinase</fullName>
        <shortName evidence="1">CMP kinase</shortName>
    </alternativeName>
</protein>
<feature type="chain" id="PRO_1000125298" description="Cytidylate kinase">
    <location>
        <begin position="1"/>
        <end position="230"/>
    </location>
</feature>
<feature type="binding site" evidence="1">
    <location>
        <begin position="12"/>
        <end position="20"/>
    </location>
    <ligand>
        <name>ATP</name>
        <dbReference type="ChEBI" id="CHEBI:30616"/>
    </ligand>
</feature>
<name>KCY_SHEB2</name>
<keyword id="KW-0067">ATP-binding</keyword>
<keyword id="KW-0963">Cytoplasm</keyword>
<keyword id="KW-0418">Kinase</keyword>
<keyword id="KW-0547">Nucleotide-binding</keyword>
<keyword id="KW-0808">Transferase</keyword>
<sequence length="230" mass="25093">MSERAPVVTIDGPSGAGKGTISQLLAQHLGWQLLDSGAIYRVLALAAIHHNVELENEESITLLAAHLDVKFLTGNDTDPVQVILEGEDVTTDIRTQECSNAASKVAAFPRVREALLRRQRAFKTAPGLIADGRDMGTVVFPSAPAKLYLTASAEERAQRRYNQLQDKGFDVNIERLLSEIIERDDRDMNRPVAPLVPAEDALIIDTSGKGIDEVLALALNFINQKLSDTN</sequence>
<accession>B8EA96</accession>
<comment type="catalytic activity">
    <reaction evidence="1">
        <text>CMP + ATP = CDP + ADP</text>
        <dbReference type="Rhea" id="RHEA:11600"/>
        <dbReference type="ChEBI" id="CHEBI:30616"/>
        <dbReference type="ChEBI" id="CHEBI:58069"/>
        <dbReference type="ChEBI" id="CHEBI:60377"/>
        <dbReference type="ChEBI" id="CHEBI:456216"/>
        <dbReference type="EC" id="2.7.4.25"/>
    </reaction>
</comment>
<comment type="catalytic activity">
    <reaction evidence="1">
        <text>dCMP + ATP = dCDP + ADP</text>
        <dbReference type="Rhea" id="RHEA:25094"/>
        <dbReference type="ChEBI" id="CHEBI:30616"/>
        <dbReference type="ChEBI" id="CHEBI:57566"/>
        <dbReference type="ChEBI" id="CHEBI:58593"/>
        <dbReference type="ChEBI" id="CHEBI:456216"/>
        <dbReference type="EC" id="2.7.4.25"/>
    </reaction>
</comment>
<comment type="subcellular location">
    <subcellularLocation>
        <location evidence="1">Cytoplasm</location>
    </subcellularLocation>
</comment>
<comment type="similarity">
    <text evidence="1">Belongs to the cytidylate kinase family. Type 1 subfamily.</text>
</comment>
<proteinExistence type="inferred from homology"/>
<reference key="1">
    <citation type="submission" date="2008-12" db="EMBL/GenBank/DDBJ databases">
        <title>Complete sequence of chromosome of Shewanella baltica OS223.</title>
        <authorList>
            <consortium name="US DOE Joint Genome Institute"/>
            <person name="Lucas S."/>
            <person name="Copeland A."/>
            <person name="Lapidus A."/>
            <person name="Glavina del Rio T."/>
            <person name="Dalin E."/>
            <person name="Tice H."/>
            <person name="Bruce D."/>
            <person name="Goodwin L."/>
            <person name="Pitluck S."/>
            <person name="Chertkov O."/>
            <person name="Meincke L."/>
            <person name="Brettin T."/>
            <person name="Detter J.C."/>
            <person name="Han C."/>
            <person name="Kuske C.R."/>
            <person name="Larimer F."/>
            <person name="Land M."/>
            <person name="Hauser L."/>
            <person name="Kyrpides N."/>
            <person name="Ovchinnikova G."/>
            <person name="Brettar I."/>
            <person name="Rodrigues J."/>
            <person name="Konstantinidis K."/>
            <person name="Tiedje J."/>
        </authorList>
    </citation>
    <scope>NUCLEOTIDE SEQUENCE [LARGE SCALE GENOMIC DNA]</scope>
    <source>
        <strain>OS223</strain>
    </source>
</reference>
<organism>
    <name type="scientific">Shewanella baltica (strain OS223)</name>
    <dbReference type="NCBI Taxonomy" id="407976"/>
    <lineage>
        <taxon>Bacteria</taxon>
        <taxon>Pseudomonadati</taxon>
        <taxon>Pseudomonadota</taxon>
        <taxon>Gammaproteobacteria</taxon>
        <taxon>Alteromonadales</taxon>
        <taxon>Shewanellaceae</taxon>
        <taxon>Shewanella</taxon>
    </lineage>
</organism>
<evidence type="ECO:0000255" key="1">
    <source>
        <dbReference type="HAMAP-Rule" id="MF_00238"/>
    </source>
</evidence>
<gene>
    <name evidence="1" type="primary">cmk</name>
    <name type="ordered locus">Sbal223_2065</name>
</gene>